<organism>
    <name type="scientific">Nitratidesulfovibrio vulgaris (strain ATCC 29579 / DSM 644 / CCUG 34227 / NCIMB 8303 / VKM B-1760 / Hildenborough)</name>
    <name type="common">Desulfovibrio vulgaris</name>
    <dbReference type="NCBI Taxonomy" id="882"/>
    <lineage>
        <taxon>Bacteria</taxon>
        <taxon>Pseudomonadati</taxon>
        <taxon>Thermodesulfobacteriota</taxon>
        <taxon>Desulfovibrionia</taxon>
        <taxon>Desulfovibrionales</taxon>
        <taxon>Desulfovibrionaceae</taxon>
        <taxon>Nitratidesulfovibrio</taxon>
    </lineage>
</organism>
<accession>Q72CG6</accession>
<gene>
    <name evidence="1" type="primary">rpsH</name>
    <name type="ordered locus">DVU_1317</name>
</gene>
<name>RS8_NITV2</name>
<dbReference type="EMBL" id="AE017285">
    <property type="protein sequence ID" value="AAS95795.1"/>
    <property type="molecule type" value="Genomic_DNA"/>
</dbReference>
<dbReference type="RefSeq" id="WP_010938612.1">
    <property type="nucleotide sequence ID" value="NC_002937.3"/>
</dbReference>
<dbReference type="RefSeq" id="YP_010536.1">
    <property type="nucleotide sequence ID" value="NC_002937.3"/>
</dbReference>
<dbReference type="SMR" id="Q72CG6"/>
<dbReference type="STRING" id="882.DVU_1317"/>
<dbReference type="PaxDb" id="882-DVU_1317"/>
<dbReference type="EnsemblBacteria" id="AAS95795">
    <property type="protein sequence ID" value="AAS95795"/>
    <property type="gene ID" value="DVU_1317"/>
</dbReference>
<dbReference type="KEGG" id="dvu:DVU_1317"/>
<dbReference type="PATRIC" id="fig|882.5.peg.1229"/>
<dbReference type="eggNOG" id="COG0096">
    <property type="taxonomic scope" value="Bacteria"/>
</dbReference>
<dbReference type="HOGENOM" id="CLU_098428_0_2_7"/>
<dbReference type="OrthoDB" id="9802617at2"/>
<dbReference type="PhylomeDB" id="Q72CG6"/>
<dbReference type="Proteomes" id="UP000002194">
    <property type="component" value="Chromosome"/>
</dbReference>
<dbReference type="GO" id="GO:1990904">
    <property type="term" value="C:ribonucleoprotein complex"/>
    <property type="evidence" value="ECO:0007669"/>
    <property type="project" value="UniProtKB-KW"/>
</dbReference>
<dbReference type="GO" id="GO:0005840">
    <property type="term" value="C:ribosome"/>
    <property type="evidence" value="ECO:0007669"/>
    <property type="project" value="UniProtKB-KW"/>
</dbReference>
<dbReference type="GO" id="GO:0019843">
    <property type="term" value="F:rRNA binding"/>
    <property type="evidence" value="ECO:0007669"/>
    <property type="project" value="UniProtKB-UniRule"/>
</dbReference>
<dbReference type="GO" id="GO:0003735">
    <property type="term" value="F:structural constituent of ribosome"/>
    <property type="evidence" value="ECO:0007669"/>
    <property type="project" value="InterPro"/>
</dbReference>
<dbReference type="GO" id="GO:0006412">
    <property type="term" value="P:translation"/>
    <property type="evidence" value="ECO:0007669"/>
    <property type="project" value="UniProtKB-UniRule"/>
</dbReference>
<dbReference type="FunFam" id="3.30.1370.30:FF:000002">
    <property type="entry name" value="30S ribosomal protein S8"/>
    <property type="match status" value="1"/>
</dbReference>
<dbReference type="FunFam" id="3.30.1490.10:FF:000001">
    <property type="entry name" value="30S ribosomal protein S8"/>
    <property type="match status" value="1"/>
</dbReference>
<dbReference type="Gene3D" id="3.30.1370.30">
    <property type="match status" value="1"/>
</dbReference>
<dbReference type="Gene3D" id="3.30.1490.10">
    <property type="match status" value="1"/>
</dbReference>
<dbReference type="HAMAP" id="MF_01302_B">
    <property type="entry name" value="Ribosomal_uS8_B"/>
    <property type="match status" value="1"/>
</dbReference>
<dbReference type="InterPro" id="IPR000630">
    <property type="entry name" value="Ribosomal_uS8"/>
</dbReference>
<dbReference type="InterPro" id="IPR047863">
    <property type="entry name" value="Ribosomal_uS8_CS"/>
</dbReference>
<dbReference type="InterPro" id="IPR035987">
    <property type="entry name" value="Ribosomal_uS8_sf"/>
</dbReference>
<dbReference type="NCBIfam" id="NF001109">
    <property type="entry name" value="PRK00136.1"/>
    <property type="match status" value="1"/>
</dbReference>
<dbReference type="PANTHER" id="PTHR11758">
    <property type="entry name" value="40S RIBOSOMAL PROTEIN S15A"/>
    <property type="match status" value="1"/>
</dbReference>
<dbReference type="Pfam" id="PF00410">
    <property type="entry name" value="Ribosomal_S8"/>
    <property type="match status" value="1"/>
</dbReference>
<dbReference type="SUPFAM" id="SSF56047">
    <property type="entry name" value="Ribosomal protein S8"/>
    <property type="match status" value="1"/>
</dbReference>
<dbReference type="PROSITE" id="PS00053">
    <property type="entry name" value="RIBOSOMAL_S8"/>
    <property type="match status" value="1"/>
</dbReference>
<protein>
    <recommendedName>
        <fullName evidence="1">Small ribosomal subunit protein uS8</fullName>
    </recommendedName>
    <alternativeName>
        <fullName evidence="2">30S ribosomal protein S8</fullName>
    </alternativeName>
</protein>
<sequence length="126" mass="13871">MLTDPIADMLTRIRNAHLALHKEVSVPRSKMKESLAAILKQEGYIEDVATEEGSIKLTLKYFKGKPVISGLKRVSKPGRRVYVGMHEIPKVQNGLGICILSTSRGVMDGNSAHESKVGGELLCEIW</sequence>
<comment type="function">
    <text evidence="1">One of the primary rRNA binding proteins, it binds directly to 16S rRNA central domain where it helps coordinate assembly of the platform of the 30S subunit.</text>
</comment>
<comment type="subunit">
    <text evidence="1">Part of the 30S ribosomal subunit. Contacts proteins S5 and S12.</text>
</comment>
<comment type="similarity">
    <text evidence="1">Belongs to the universal ribosomal protein uS8 family.</text>
</comment>
<feature type="chain" id="PRO_0000126404" description="Small ribosomal subunit protein uS8">
    <location>
        <begin position="1"/>
        <end position="126"/>
    </location>
</feature>
<proteinExistence type="inferred from homology"/>
<reference key="1">
    <citation type="journal article" date="2004" name="Nat. Biotechnol.">
        <title>The genome sequence of the anaerobic, sulfate-reducing bacterium Desulfovibrio vulgaris Hildenborough.</title>
        <authorList>
            <person name="Heidelberg J.F."/>
            <person name="Seshadri R."/>
            <person name="Haveman S.A."/>
            <person name="Hemme C.L."/>
            <person name="Paulsen I.T."/>
            <person name="Kolonay J.F."/>
            <person name="Eisen J.A."/>
            <person name="Ward N.L."/>
            <person name="Methe B.A."/>
            <person name="Brinkac L.M."/>
            <person name="Daugherty S.C."/>
            <person name="DeBoy R.T."/>
            <person name="Dodson R.J."/>
            <person name="Durkin A.S."/>
            <person name="Madupu R."/>
            <person name="Nelson W.C."/>
            <person name="Sullivan S.A."/>
            <person name="Fouts D.E."/>
            <person name="Haft D.H."/>
            <person name="Selengut J."/>
            <person name="Peterson J.D."/>
            <person name="Davidsen T.M."/>
            <person name="Zafar N."/>
            <person name="Zhou L."/>
            <person name="Radune D."/>
            <person name="Dimitrov G."/>
            <person name="Hance M."/>
            <person name="Tran K."/>
            <person name="Khouri H.M."/>
            <person name="Gill J."/>
            <person name="Utterback T.R."/>
            <person name="Feldblyum T.V."/>
            <person name="Wall J.D."/>
            <person name="Voordouw G."/>
            <person name="Fraser C.M."/>
        </authorList>
    </citation>
    <scope>NUCLEOTIDE SEQUENCE [LARGE SCALE GENOMIC DNA]</scope>
    <source>
        <strain>ATCC 29579 / DSM 644 / CCUG 34227 / NCIMB 8303 / VKM B-1760 / Hildenborough</strain>
    </source>
</reference>
<keyword id="KW-1185">Reference proteome</keyword>
<keyword id="KW-0687">Ribonucleoprotein</keyword>
<keyword id="KW-0689">Ribosomal protein</keyword>
<keyword id="KW-0694">RNA-binding</keyword>
<keyword id="KW-0699">rRNA-binding</keyword>
<evidence type="ECO:0000255" key="1">
    <source>
        <dbReference type="HAMAP-Rule" id="MF_01302"/>
    </source>
</evidence>
<evidence type="ECO:0000305" key="2"/>